<keyword id="KW-0167">Capsid protein</keyword>
<keyword id="KW-1032">Host cell membrane</keyword>
<keyword id="KW-1035">Host cytoplasm</keyword>
<keyword id="KW-1043">Host membrane</keyword>
<keyword id="KW-1048">Host nucleus</keyword>
<keyword id="KW-0945">Host-virus interaction</keyword>
<keyword id="KW-0449">Lipoprotein</keyword>
<keyword id="KW-0472">Membrane</keyword>
<keyword id="KW-0479">Metal-binding</keyword>
<keyword id="KW-0519">Myristate</keyword>
<keyword id="KW-0597">Phosphoprotein</keyword>
<keyword id="KW-0677">Repeat</keyword>
<keyword id="KW-0688">Ribosomal frameshifting</keyword>
<keyword id="KW-0694">RNA-binding</keyword>
<keyword id="KW-1198">Viral budding</keyword>
<keyword id="KW-1187">Viral budding via the host ESCRT complexes</keyword>
<keyword id="KW-0543">Viral nucleoprotein</keyword>
<keyword id="KW-1188">Viral release from host cell</keyword>
<keyword id="KW-0946">Virion</keyword>
<keyword id="KW-0862">Zinc</keyword>
<keyword id="KW-0863">Zinc-finger</keyword>
<sequence length="502" mass="56481">MGNGNSALLGTDLDKFEKIRLKRGGKKCYRLKHLCWCKGELDRFGLSDKLLETQQGCEKILSVCWPLYDQGSDNLKALVGTVCVVACIHAGIEIKSTQDALKKLKVITRKEEKQEDESKNFPVQRDAAGQYQYTPISPRIIQTWVKTVEEKKWKPEVIPLFSALTEGAISHDLNIMLNAVGDHQGAMQVLKDVINEQAAEWDLTHPQQQPAQPGGGLRTPSGSDIAGTTSTVEEQLAWMNMQQNAINVGTIYKSWIILGMNRLVKSHCPISITDVRQGPKEAFKDYVDRFYNVMRAEQASGEVKMWMQQHLLIENANPECKQILRSLGKGATLEEMLEACQGVGGPQHKARLMAEMMRTVVGQSQNFVQQRGPQRGPVRQPTGRKPICFNCNKEGHVARFFKAPRRKGCWNCGAMDHQKAQCPKPAQQQRVNFLGYGPWGPSKPGNYPAQEVTPTAPPLEEKPLQKTLSTYQKLGRGLRQKMKEEKREEDFHSLSTLFQEDQ</sequence>
<organism>
    <name type="scientific">Simian immunodeficiency virus (isolate GB1)</name>
    <name type="common">SIV-mnd</name>
    <name type="synonym">Simian immunodeficiency virus mandrill</name>
    <dbReference type="NCBI Taxonomy" id="11732"/>
    <lineage>
        <taxon>Viruses</taxon>
        <taxon>Riboviria</taxon>
        <taxon>Pararnavirae</taxon>
        <taxon>Artverviricota</taxon>
        <taxon>Revtraviricetes</taxon>
        <taxon>Ortervirales</taxon>
        <taxon>Retroviridae</taxon>
        <taxon>Orthoretrovirinae</taxon>
        <taxon>Lentivirus</taxon>
        <taxon>Simian immunodeficiency virus</taxon>
    </lineage>
</organism>
<protein>
    <recommendedName>
        <fullName>Gag polyprotein</fullName>
    </recommendedName>
    <alternativeName>
        <fullName>Pr55Gag</fullName>
    </alternativeName>
    <component>
        <recommendedName>
            <fullName>Matrix protein p17</fullName>
            <shortName>MA</shortName>
        </recommendedName>
    </component>
    <component>
        <recommendedName>
            <fullName>Capsid protein p24</fullName>
            <shortName>CA</shortName>
        </recommendedName>
    </component>
    <component>
        <recommendedName>
            <fullName>Spacer peptide p2</fullName>
        </recommendedName>
    </component>
    <component>
        <recommendedName>
            <fullName>Nucleocapsid protein p7</fullName>
            <shortName>NC</shortName>
        </recommendedName>
    </component>
    <component>
        <recommendedName>
            <fullName>Spacer peptide p1</fullName>
        </recommendedName>
    </component>
    <component>
        <recommendedName>
            <fullName>p6-gag</fullName>
        </recommendedName>
    </component>
</protein>
<accession>P22381</accession>
<organismHost>
    <name type="scientific">Cercopithecidae</name>
    <name type="common">Old World monkeys</name>
    <dbReference type="NCBI Taxonomy" id="9527"/>
</organismHost>
<evidence type="ECO:0000250" key="1"/>
<evidence type="ECO:0000250" key="2">
    <source>
        <dbReference type="UniProtKB" id="P04591"/>
    </source>
</evidence>
<evidence type="ECO:0000250" key="3">
    <source>
        <dbReference type="UniProtKB" id="P05893"/>
    </source>
</evidence>
<evidence type="ECO:0000250" key="4">
    <source>
        <dbReference type="UniProtKB" id="P12493"/>
    </source>
</evidence>
<evidence type="ECO:0000255" key="5">
    <source>
        <dbReference type="PROSITE-ProRule" id="PRU00047"/>
    </source>
</evidence>
<evidence type="ECO:0000256" key="6">
    <source>
        <dbReference type="SAM" id="MobiDB-lite"/>
    </source>
</evidence>
<evidence type="ECO:0000305" key="7"/>
<reference key="1">
    <citation type="journal article" date="1989" name="Nature">
        <title>Sequence of a novel simian immunodeficiency virus from a wild-caught African mandrill.</title>
        <authorList>
            <person name="Tsujimoto H."/>
            <person name="Hasegawa A."/>
            <person name="Maki N."/>
            <person name="Fukasawa M."/>
            <person name="Miura T."/>
            <person name="Speidel S."/>
            <person name="Cooper R.W."/>
            <person name="Moriyama E.N."/>
            <person name="Gojobori T."/>
            <person name="Hayami M."/>
        </authorList>
    </citation>
    <scope>NUCLEOTIDE SEQUENCE [GENOMIC RNA]</scope>
</reference>
<gene>
    <name type="primary">gag</name>
</gene>
<name>GAG_SIVGB</name>
<proteinExistence type="inferred from homology"/>
<comment type="function">
    <text evidence="1">Matrix protein p17 targets Gag and Gag-Pol polyproteins to the plasma membrane via a multipartite membrane binding signal, that includes its myristoylated N-terminus. Also mediates nuclear localization of the preintegration complex. Implicated in the release from host cell mediated by Vpu (By similarity).</text>
</comment>
<comment type="function">
    <text evidence="1">Capsid protein p24 forms the conical core of the virus that encapsulates the genomic RNA-nucleocapsid complex.</text>
</comment>
<comment type="function">
    <text evidence="1">Nucleocapsid protein p7 encapsulates and protects viral dimeric unspliced (genomic) RNA. Binds these RNAs through its zinc fingers (By similarity).</text>
</comment>
<comment type="function">
    <text evidence="1">p6-gag plays a role in budding of the assembled particle by interacting with the host class E VPS proteins TSG101 and PDCD6IP/AIP1.</text>
</comment>
<comment type="subunit">
    <molecule>Matrix protein p17</molecule>
    <text evidence="2 4">Homotrimer. Interacts with gp41 (via C-terminus).</text>
</comment>
<comment type="subunit">
    <molecule>p6-gag</molecule>
    <text evidence="4">Interacts with host TSG101 (By similarity).</text>
</comment>
<comment type="subcellular location">
    <molecule>Matrix protein p17</molecule>
    <subcellularLocation>
        <location evidence="7">Virion</location>
    </subcellularLocation>
    <subcellularLocation>
        <location evidence="1">Host nucleus</location>
    </subcellularLocation>
    <subcellularLocation>
        <location evidence="1">Host cytoplasm</location>
    </subcellularLocation>
    <subcellularLocation>
        <location evidence="7">Host cell membrane</location>
        <topology evidence="7">Lipid-anchor</topology>
    </subcellularLocation>
    <text evidence="1">Following virus entry, the nuclear localization signal (NLS) of the matrix protein participates with Vpr to the nuclear localization of the viral genome. During virus production, the nuclear export activity of the matrix protein counteracts the NLS to maintain the Gag and Gag-Pol polyproteins in the cytoplasm, thereby directing unspliced RNA to the plasma membrane (By similarity).</text>
</comment>
<comment type="subcellular location">
    <molecule>Capsid protein p24</molecule>
    <subcellularLocation>
        <location evidence="7">Virion</location>
    </subcellularLocation>
</comment>
<comment type="subcellular location">
    <molecule>Nucleocapsid protein p7</molecule>
    <subcellularLocation>
        <location evidence="7">Virion</location>
    </subcellularLocation>
</comment>
<comment type="alternative products">
    <event type="ribosomal frameshifting"/>
    <isoform>
        <id>P22381-1</id>
        <name>Gag polyprotein</name>
        <sequence type="displayed"/>
    </isoform>
    <isoform>
        <id>P22382-1</id>
        <name>Gag-Pol polyprotein</name>
        <sequence type="external"/>
    </isoform>
    <text>Translation results in the formation of the Gag polyprotein most of the time. Ribosomal frameshifting at the gag-pol genes boundary occurs at low frequency and produces the Gag-Pol polyprotein. This strategy of translation probably allows the virus to modulate the quantity of each viral protein. Maintenance of a correct Gag to Gag-Pol ratio is essential for RNA dimerization and viral infectivity.</text>
</comment>
<comment type="domain">
    <text evidence="3">Late-budding domains (L domains) are short sequence motifs essential for viral particle budding. They recruit proteins of the host ESCRT machinery (Endosomal Sorting Complex Required for Transport) or ESCRT-associated proteins. p6-gag contains one L domain: a PTAP/PSAP motif, which interacts with the UEV domain of TSG101.</text>
</comment>
<comment type="PTM">
    <text evidence="1">Capsid protein p24 is phosphorylated.</text>
</comment>
<comment type="PTM">
    <text evidence="1">Specific enzymatic cleavages by the viral protease yield mature proteins. The polyprotein is cleaved during and after budding, this process is termed maturation (By similarity).</text>
</comment>
<comment type="miscellaneous">
    <text>This is an African mandrill isolate.</text>
</comment>
<comment type="miscellaneous">
    <molecule>Isoform Gag polyprotein</molecule>
    <text>Produced by conventional translation.</text>
</comment>
<comment type="similarity">
    <text evidence="7">Belongs to the primate lentivirus group gag polyprotein family.</text>
</comment>
<feature type="initiator methionine" description="Removed; by host" evidence="1">
    <location>
        <position position="1"/>
    </location>
</feature>
<feature type="chain" id="PRO_0000316121" description="Gag polyprotein" evidence="1">
    <location>
        <begin position="2"/>
        <end position="502"/>
    </location>
</feature>
<feature type="chain" id="PRO_0000038631" description="Matrix protein p17" evidence="1">
    <location>
        <begin position="2"/>
        <end position="121"/>
    </location>
</feature>
<feature type="chain" id="PRO_0000038632" description="Capsid protein p24" evidence="1">
    <location>
        <begin position="122"/>
        <end position="353"/>
    </location>
</feature>
<feature type="peptide" id="PRO_0000316122" description="Spacer peptide p2" evidence="1">
    <location>
        <begin position="354"/>
        <end position="367"/>
    </location>
</feature>
<feature type="chain" id="PRO_0000038633" description="Nucleocapsid protein p7" evidence="1">
    <location>
        <begin position="368"/>
        <end position="432"/>
    </location>
</feature>
<feature type="peptide" id="PRO_0000316123" description="Spacer peptide p1" evidence="1">
    <location>
        <begin position="433"/>
        <end position="447"/>
    </location>
</feature>
<feature type="chain" id="PRO_0000316124" description="p6-gag" evidence="1">
    <location>
        <begin position="448"/>
        <end position="502"/>
    </location>
</feature>
<feature type="zinc finger region" description="CCHC-type 1" evidence="5">
    <location>
        <begin position="386"/>
        <end position="403"/>
    </location>
</feature>
<feature type="zinc finger region" description="CCHC-type 2" evidence="5">
    <location>
        <begin position="407"/>
        <end position="424"/>
    </location>
</feature>
<feature type="region of interest" description="Disordered" evidence="6">
    <location>
        <begin position="204"/>
        <end position="226"/>
    </location>
</feature>
<feature type="region of interest" description="Disordered" evidence="6">
    <location>
        <begin position="442"/>
        <end position="502"/>
    </location>
</feature>
<feature type="short sequence motif" description="Nuclear export signal" evidence="1">
    <location>
        <begin position="16"/>
        <end position="22"/>
    </location>
</feature>
<feature type="short sequence motif" description="Nuclear localization signal" evidence="1">
    <location>
        <begin position="26"/>
        <end position="32"/>
    </location>
</feature>
<feature type="short sequence motif" description="PTAP/PSAP motif" evidence="3">
    <location>
        <begin position="454"/>
        <end position="457"/>
    </location>
</feature>
<feature type="compositionally biased region" description="Basic and acidic residues" evidence="6">
    <location>
        <begin position="481"/>
        <end position="492"/>
    </location>
</feature>
<feature type="compositionally biased region" description="Polar residues" evidence="6">
    <location>
        <begin position="493"/>
        <end position="502"/>
    </location>
</feature>
<feature type="site" description="Cleavage; by viral protease" evidence="1">
    <location>
        <begin position="367"/>
        <end position="368"/>
    </location>
</feature>
<feature type="site" description="Cleavage; by viral protease" evidence="1">
    <location>
        <begin position="432"/>
        <end position="433"/>
    </location>
</feature>
<feature type="lipid moiety-binding region" description="N-myristoyl glycine; by host" evidence="1">
    <location>
        <position position="2"/>
    </location>
</feature>
<dbReference type="EMBL" id="M27470">
    <property type="protein sequence ID" value="AAB49568.1"/>
    <property type="molecule type" value="Genomic_RNA"/>
</dbReference>
<dbReference type="SMR" id="P22381"/>
<dbReference type="PRO" id="PR:P22381"/>
<dbReference type="Proteomes" id="UP000259373">
    <property type="component" value="Segment"/>
</dbReference>
<dbReference type="GO" id="GO:0030430">
    <property type="term" value="C:host cell cytoplasm"/>
    <property type="evidence" value="ECO:0007669"/>
    <property type="project" value="UniProtKB-SubCell"/>
</dbReference>
<dbReference type="GO" id="GO:0042025">
    <property type="term" value="C:host cell nucleus"/>
    <property type="evidence" value="ECO:0007669"/>
    <property type="project" value="UniProtKB-SubCell"/>
</dbReference>
<dbReference type="GO" id="GO:0020002">
    <property type="term" value="C:host cell plasma membrane"/>
    <property type="evidence" value="ECO:0007669"/>
    <property type="project" value="UniProtKB-SubCell"/>
</dbReference>
<dbReference type="GO" id="GO:0016020">
    <property type="term" value="C:membrane"/>
    <property type="evidence" value="ECO:0007669"/>
    <property type="project" value="UniProtKB-KW"/>
</dbReference>
<dbReference type="GO" id="GO:0019013">
    <property type="term" value="C:viral nucleocapsid"/>
    <property type="evidence" value="ECO:0007669"/>
    <property type="project" value="UniProtKB-KW"/>
</dbReference>
<dbReference type="GO" id="GO:0003723">
    <property type="term" value="F:RNA binding"/>
    <property type="evidence" value="ECO:0007669"/>
    <property type="project" value="UniProtKB-KW"/>
</dbReference>
<dbReference type="GO" id="GO:0005198">
    <property type="term" value="F:structural molecule activity"/>
    <property type="evidence" value="ECO:0007669"/>
    <property type="project" value="InterPro"/>
</dbReference>
<dbReference type="GO" id="GO:0008270">
    <property type="term" value="F:zinc ion binding"/>
    <property type="evidence" value="ECO:0007669"/>
    <property type="project" value="UniProtKB-KW"/>
</dbReference>
<dbReference type="GO" id="GO:0039702">
    <property type="term" value="P:viral budding via host ESCRT complex"/>
    <property type="evidence" value="ECO:0007669"/>
    <property type="project" value="UniProtKB-KW"/>
</dbReference>
<dbReference type="GO" id="GO:0075523">
    <property type="term" value="P:viral translational frameshifting"/>
    <property type="evidence" value="ECO:0007669"/>
    <property type="project" value="UniProtKB-KW"/>
</dbReference>
<dbReference type="Gene3D" id="1.10.1200.30">
    <property type="match status" value="1"/>
</dbReference>
<dbReference type="Gene3D" id="1.10.375.10">
    <property type="entry name" value="Human Immunodeficiency Virus Type 1 Capsid Protein"/>
    <property type="match status" value="1"/>
</dbReference>
<dbReference type="Gene3D" id="1.10.150.90">
    <property type="entry name" value="Immunodeficiency lentiviruses, gag gene matrix protein p17"/>
    <property type="match status" value="1"/>
</dbReference>
<dbReference type="Gene3D" id="1.20.5.760">
    <property type="entry name" value="Single helix bin"/>
    <property type="match status" value="1"/>
</dbReference>
<dbReference type="Gene3D" id="4.10.60.10">
    <property type="entry name" value="Zinc finger, CCHC-type"/>
    <property type="match status" value="1"/>
</dbReference>
<dbReference type="InterPro" id="IPR045345">
    <property type="entry name" value="Gag_p24_C"/>
</dbReference>
<dbReference type="InterPro" id="IPR000071">
    <property type="entry name" value="Lentvrl_matrix_N"/>
</dbReference>
<dbReference type="InterPro" id="IPR012344">
    <property type="entry name" value="Matrix_HIV/RSV_N"/>
</dbReference>
<dbReference type="InterPro" id="IPR050195">
    <property type="entry name" value="Primate_lentivir_Gag_pol-like"/>
</dbReference>
<dbReference type="InterPro" id="IPR008916">
    <property type="entry name" value="Retrov_capsid_C"/>
</dbReference>
<dbReference type="InterPro" id="IPR008919">
    <property type="entry name" value="Retrov_capsid_N"/>
</dbReference>
<dbReference type="InterPro" id="IPR010999">
    <property type="entry name" value="Retrovr_matrix"/>
</dbReference>
<dbReference type="InterPro" id="IPR001878">
    <property type="entry name" value="Znf_CCHC"/>
</dbReference>
<dbReference type="InterPro" id="IPR036875">
    <property type="entry name" value="Znf_CCHC_sf"/>
</dbReference>
<dbReference type="PANTHER" id="PTHR40389:SF4">
    <property type="match status" value="1"/>
</dbReference>
<dbReference type="PANTHER" id="PTHR40389">
    <property type="entry name" value="ENDOGENOUS RETROVIRUS GROUP K MEMBER 24 GAG POLYPROTEIN-RELATED"/>
    <property type="match status" value="1"/>
</dbReference>
<dbReference type="Pfam" id="PF00540">
    <property type="entry name" value="Gag_p17"/>
    <property type="match status" value="1"/>
</dbReference>
<dbReference type="Pfam" id="PF00607">
    <property type="entry name" value="Gag_p24"/>
    <property type="match status" value="1"/>
</dbReference>
<dbReference type="Pfam" id="PF19317">
    <property type="entry name" value="Gag_p24_C"/>
    <property type="match status" value="1"/>
</dbReference>
<dbReference type="Pfam" id="PF00098">
    <property type="entry name" value="zf-CCHC"/>
    <property type="match status" value="2"/>
</dbReference>
<dbReference type="PRINTS" id="PR00234">
    <property type="entry name" value="HIV1MATRIX"/>
</dbReference>
<dbReference type="SMART" id="SM00343">
    <property type="entry name" value="ZnF_C2HC"/>
    <property type="match status" value="2"/>
</dbReference>
<dbReference type="SUPFAM" id="SSF47836">
    <property type="entry name" value="Retroviral matrix proteins"/>
    <property type="match status" value="1"/>
</dbReference>
<dbReference type="SUPFAM" id="SSF47353">
    <property type="entry name" value="Retrovirus capsid dimerization domain-like"/>
    <property type="match status" value="1"/>
</dbReference>
<dbReference type="SUPFAM" id="SSF47943">
    <property type="entry name" value="Retrovirus capsid protein, N-terminal core domain"/>
    <property type="match status" value="1"/>
</dbReference>
<dbReference type="SUPFAM" id="SSF57756">
    <property type="entry name" value="Retrovirus zinc finger-like domains"/>
    <property type="match status" value="1"/>
</dbReference>
<dbReference type="PROSITE" id="PS50158">
    <property type="entry name" value="ZF_CCHC"/>
    <property type="match status" value="1"/>
</dbReference>